<proteinExistence type="inferred from homology"/>
<organism>
    <name type="scientific">Xanthomonas oryzae pv. oryzae (strain KACC10331 / KXO85)</name>
    <dbReference type="NCBI Taxonomy" id="291331"/>
    <lineage>
        <taxon>Bacteria</taxon>
        <taxon>Pseudomonadati</taxon>
        <taxon>Pseudomonadota</taxon>
        <taxon>Gammaproteobacteria</taxon>
        <taxon>Lysobacterales</taxon>
        <taxon>Lysobacteraceae</taxon>
        <taxon>Xanthomonas</taxon>
    </lineage>
</organism>
<evidence type="ECO:0000255" key="1">
    <source>
        <dbReference type="HAMAP-Rule" id="MF_00333"/>
    </source>
</evidence>
<comment type="function">
    <text evidence="1">Involved in the heme biosynthesis. Catalyzes the aerobic oxidative decarboxylation of propionate groups of rings A and B of coproporphyrinogen-III to yield the vinyl groups in protoporphyrinogen-IX.</text>
</comment>
<comment type="catalytic activity">
    <reaction evidence="1">
        <text>coproporphyrinogen III + O2 + 2 H(+) = protoporphyrinogen IX + 2 CO2 + 2 H2O</text>
        <dbReference type="Rhea" id="RHEA:18257"/>
        <dbReference type="ChEBI" id="CHEBI:15377"/>
        <dbReference type="ChEBI" id="CHEBI:15378"/>
        <dbReference type="ChEBI" id="CHEBI:15379"/>
        <dbReference type="ChEBI" id="CHEBI:16526"/>
        <dbReference type="ChEBI" id="CHEBI:57307"/>
        <dbReference type="ChEBI" id="CHEBI:57309"/>
        <dbReference type="EC" id="1.3.3.3"/>
    </reaction>
</comment>
<comment type="cofactor">
    <cofactor evidence="1">
        <name>a divalent metal cation</name>
        <dbReference type="ChEBI" id="CHEBI:60240"/>
    </cofactor>
</comment>
<comment type="pathway">
    <text evidence="1">Porphyrin-containing compound metabolism; protoporphyrin-IX biosynthesis; protoporphyrinogen-IX from coproporphyrinogen-III (O2 route): step 1/1.</text>
</comment>
<comment type="subunit">
    <text evidence="1">Homodimer.</text>
</comment>
<comment type="subcellular location">
    <subcellularLocation>
        <location evidence="1">Cytoplasm</location>
    </subcellularLocation>
</comment>
<comment type="similarity">
    <text evidence="1">Belongs to the aerobic coproporphyrinogen-III oxidase family.</text>
</comment>
<dbReference type="EC" id="1.3.3.3" evidence="1"/>
<dbReference type="EMBL" id="AE013598">
    <property type="protein sequence ID" value="AAW77493.1"/>
    <property type="molecule type" value="Genomic_DNA"/>
</dbReference>
<dbReference type="SMR" id="Q5GUY0"/>
<dbReference type="STRING" id="291331.XOO4239"/>
<dbReference type="KEGG" id="xoo:XOO4239"/>
<dbReference type="HOGENOM" id="CLU_026169_0_1_6"/>
<dbReference type="UniPathway" id="UPA00251">
    <property type="reaction ID" value="UER00322"/>
</dbReference>
<dbReference type="Proteomes" id="UP000006735">
    <property type="component" value="Chromosome"/>
</dbReference>
<dbReference type="GO" id="GO:0005737">
    <property type="term" value="C:cytoplasm"/>
    <property type="evidence" value="ECO:0007669"/>
    <property type="project" value="UniProtKB-SubCell"/>
</dbReference>
<dbReference type="GO" id="GO:0004109">
    <property type="term" value="F:coproporphyrinogen oxidase activity"/>
    <property type="evidence" value="ECO:0007669"/>
    <property type="project" value="UniProtKB-UniRule"/>
</dbReference>
<dbReference type="GO" id="GO:0046872">
    <property type="term" value="F:metal ion binding"/>
    <property type="evidence" value="ECO:0007669"/>
    <property type="project" value="UniProtKB-KW"/>
</dbReference>
<dbReference type="GO" id="GO:0042803">
    <property type="term" value="F:protein homodimerization activity"/>
    <property type="evidence" value="ECO:0000250"/>
    <property type="project" value="UniProtKB"/>
</dbReference>
<dbReference type="GO" id="GO:0006782">
    <property type="term" value="P:protoporphyrinogen IX biosynthetic process"/>
    <property type="evidence" value="ECO:0007669"/>
    <property type="project" value="UniProtKB-UniRule"/>
</dbReference>
<dbReference type="FunFam" id="3.40.1500.10:FF:000001">
    <property type="entry name" value="Oxygen-dependent coproporphyrinogen-III oxidase"/>
    <property type="match status" value="1"/>
</dbReference>
<dbReference type="Gene3D" id="3.40.1500.10">
    <property type="entry name" value="Coproporphyrinogen III oxidase, aerobic"/>
    <property type="match status" value="1"/>
</dbReference>
<dbReference type="HAMAP" id="MF_00333">
    <property type="entry name" value="Coprogen_oxidas"/>
    <property type="match status" value="1"/>
</dbReference>
<dbReference type="InterPro" id="IPR001260">
    <property type="entry name" value="Coprogen_oxidase_aer"/>
</dbReference>
<dbReference type="InterPro" id="IPR036406">
    <property type="entry name" value="Coprogen_oxidase_aer_sf"/>
</dbReference>
<dbReference type="InterPro" id="IPR018375">
    <property type="entry name" value="Coprogen_oxidase_CS"/>
</dbReference>
<dbReference type="NCBIfam" id="NF003727">
    <property type="entry name" value="PRK05330.1"/>
    <property type="match status" value="1"/>
</dbReference>
<dbReference type="PANTHER" id="PTHR10755">
    <property type="entry name" value="COPROPORPHYRINOGEN III OXIDASE, MITOCHONDRIAL"/>
    <property type="match status" value="1"/>
</dbReference>
<dbReference type="PANTHER" id="PTHR10755:SF0">
    <property type="entry name" value="OXYGEN-DEPENDENT COPROPORPHYRINOGEN-III OXIDASE, MITOCHONDRIAL"/>
    <property type="match status" value="1"/>
</dbReference>
<dbReference type="Pfam" id="PF01218">
    <property type="entry name" value="Coprogen_oxidas"/>
    <property type="match status" value="1"/>
</dbReference>
<dbReference type="PIRSF" id="PIRSF000166">
    <property type="entry name" value="Coproporphyri_ox"/>
    <property type="match status" value="1"/>
</dbReference>
<dbReference type="PRINTS" id="PR00073">
    <property type="entry name" value="COPRGNOXDASE"/>
</dbReference>
<dbReference type="SUPFAM" id="SSF102886">
    <property type="entry name" value="Coproporphyrinogen III oxidase"/>
    <property type="match status" value="1"/>
</dbReference>
<dbReference type="PROSITE" id="PS01021">
    <property type="entry name" value="COPROGEN_OXIDASE"/>
    <property type="match status" value="1"/>
</dbReference>
<sequence length="299" mass="34371">MNEFDRVRDYLTDLQDRICAAVEAADGKARFAEDLWKREEGGGGRTRILRDGAVFEQAGIGFSDVSGTRLPPSASAHRPELAGATWRACGVSLVFHPHNPYIPTTHMNVRYFRAERDGEVVAAWFGGGFDLTPFYPFDEDVQHWHRVAQALCEPFGEERYAAHKRWCDEYFFLRHRNETRGVGGLFFDDLGKEFEHDFAYQQAVGNGFLDAYMPIVQRRKDTAYGEREREFQLYRRGRYVEFNLVYDRGTLFGLQSGGRAESILMSLPPRVRWEYGFTPEPGSAEARLADYLIPRDWLG</sequence>
<gene>
    <name evidence="1" type="primary">hemF</name>
    <name type="ordered locus">XOO4239</name>
</gene>
<feature type="chain" id="PRO_1000019515" description="Oxygen-dependent coproporphyrinogen-III oxidase">
    <location>
        <begin position="1"/>
        <end position="299"/>
    </location>
</feature>
<feature type="region of interest" description="Important for dimerization" evidence="1">
    <location>
        <begin position="239"/>
        <end position="274"/>
    </location>
</feature>
<feature type="active site" description="Proton donor" evidence="1">
    <location>
        <position position="106"/>
    </location>
</feature>
<feature type="binding site" evidence="1">
    <location>
        <position position="92"/>
    </location>
    <ligand>
        <name>substrate</name>
    </ligand>
</feature>
<feature type="binding site" evidence="1">
    <location>
        <position position="96"/>
    </location>
    <ligand>
        <name>a divalent metal cation</name>
        <dbReference type="ChEBI" id="CHEBI:60240"/>
    </ligand>
</feature>
<feature type="binding site" evidence="1">
    <location>
        <position position="106"/>
    </location>
    <ligand>
        <name>a divalent metal cation</name>
        <dbReference type="ChEBI" id="CHEBI:60240"/>
    </ligand>
</feature>
<feature type="binding site" evidence="1">
    <location>
        <begin position="108"/>
        <end position="110"/>
    </location>
    <ligand>
        <name>substrate</name>
    </ligand>
</feature>
<feature type="binding site" evidence="1">
    <location>
        <position position="145"/>
    </location>
    <ligand>
        <name>a divalent metal cation</name>
        <dbReference type="ChEBI" id="CHEBI:60240"/>
    </ligand>
</feature>
<feature type="binding site" evidence="1">
    <location>
        <position position="175"/>
    </location>
    <ligand>
        <name>a divalent metal cation</name>
        <dbReference type="ChEBI" id="CHEBI:60240"/>
    </ligand>
</feature>
<feature type="binding site" evidence="1">
    <location>
        <begin position="257"/>
        <end position="259"/>
    </location>
    <ligand>
        <name>substrate</name>
    </ligand>
</feature>
<feature type="site" description="Important for dimerization" evidence="1">
    <location>
        <position position="175"/>
    </location>
</feature>
<keyword id="KW-0963">Cytoplasm</keyword>
<keyword id="KW-0350">Heme biosynthesis</keyword>
<keyword id="KW-0479">Metal-binding</keyword>
<keyword id="KW-0560">Oxidoreductase</keyword>
<keyword id="KW-0627">Porphyrin biosynthesis</keyword>
<keyword id="KW-1185">Reference proteome</keyword>
<name>HEM6_XANOR</name>
<protein>
    <recommendedName>
        <fullName evidence="1">Oxygen-dependent coproporphyrinogen-III oxidase</fullName>
        <shortName evidence="1">CPO</shortName>
        <shortName evidence="1">Coprogen oxidase</shortName>
        <shortName evidence="1">Coproporphyrinogenase</shortName>
        <ecNumber evidence="1">1.3.3.3</ecNumber>
    </recommendedName>
</protein>
<reference key="1">
    <citation type="journal article" date="2005" name="Nucleic Acids Res.">
        <title>The genome sequence of Xanthomonas oryzae pathovar oryzae KACC10331, the bacterial blight pathogen of rice.</title>
        <authorList>
            <person name="Lee B.-M."/>
            <person name="Park Y.-J."/>
            <person name="Park D.-S."/>
            <person name="Kang H.-W."/>
            <person name="Kim J.-G."/>
            <person name="Song E.-S."/>
            <person name="Park I.-C."/>
            <person name="Yoon U.-H."/>
            <person name="Hahn J.-H."/>
            <person name="Koo B.-S."/>
            <person name="Lee G.-B."/>
            <person name="Kim H."/>
            <person name="Park H.-S."/>
            <person name="Yoon K.-O."/>
            <person name="Kim J.-H."/>
            <person name="Jung C.-H."/>
            <person name="Koh N.-H."/>
            <person name="Seo J.-S."/>
            <person name="Go S.-J."/>
        </authorList>
    </citation>
    <scope>NUCLEOTIDE SEQUENCE [LARGE SCALE GENOMIC DNA]</scope>
    <source>
        <strain>KACC10331 / KXO85</strain>
    </source>
</reference>
<accession>Q5GUY0</accession>